<accession>Q8CG72</accession>
<accession>A3KFY3</accession>
<accession>Q80UW9</accession>
<accession>Q8R575</accession>
<accession>Q921U6</accession>
<comment type="function">
    <text evidence="1 4 5">ADP-ribosylhydrolase that preferentially hydrolyzes the scissile alpha-O-linkage attached to the anomeric C1'' position of ADP-ribose and acts on different substrates, such as proteins ADP-ribosylated on serine and threonine, free poly(ADP-ribose) and O-acetyl-ADP-D-ribose (By similarity). Specifically acts as a serine mono-ADP-ribosylhydrolase by mediating the removal of mono-ADP-ribose attached to serine residues on proteins, thereby playing a key role in DNA damage response (By similarity). Serine ADP-ribosylation of proteins constitutes the primary form of ADP-ribosylation of proteins in response to DNA damage (By similarity). Does not hydrolyze ADP-ribosyl-arginine, -cysteine, -diphthamide, or -asparagine bonds (By similarity). Also able to degrade protein free poly(ADP-ribose), which is synthesized in response to DNA damage: free poly(ADP-ribose) acts as a potent cell death signal and its degradation by ADPRHL2 protects cells from poly(ADP-ribose)-dependent cell death, a process named parthanatos (PubMed:24191052, PubMed:30830864). Also hydrolyzes free poly(ADP-ribose) in mitochondria (By similarity). Specifically digests O-acetyl-ADP-D-ribose, a product of deacetylation reactions catalyzed by sirtuins (By similarity). Specifically degrades 1''-O-acetyl-ADP-D-ribose isomer, rather than 2''-O-acetyl-ADP-D-ribose or 3''-O-acetyl-ADP-D-ribose isomers (By similarity).</text>
</comment>
<comment type="catalytic activity">
    <reaction evidence="4">
        <text>[(1''-&gt;2')-ADP-alpha-D-ribose](n) + H2O = [(1''-&gt;2')-ADP-alpha-D-ribose](n-1) + ADP-D-ribose</text>
        <dbReference type="Rhea" id="RHEA:52216"/>
        <dbReference type="Rhea" id="RHEA-COMP:16922"/>
        <dbReference type="Rhea" id="RHEA-COMP:16923"/>
        <dbReference type="ChEBI" id="CHEBI:15377"/>
        <dbReference type="ChEBI" id="CHEBI:57967"/>
        <dbReference type="ChEBI" id="CHEBI:142512"/>
        <dbReference type="EC" id="3.2.1.143"/>
    </reaction>
</comment>
<comment type="catalytic activity">
    <reaction evidence="1">
        <text>1''-O-acetyl-ADP-alpha-D-ribose + H2O = ADP-D-ribose + acetate + H(+)</text>
        <dbReference type="Rhea" id="RHEA:58112"/>
        <dbReference type="ChEBI" id="CHEBI:15377"/>
        <dbReference type="ChEBI" id="CHEBI:15378"/>
        <dbReference type="ChEBI" id="CHEBI:30089"/>
        <dbReference type="ChEBI" id="CHEBI:57967"/>
        <dbReference type="ChEBI" id="CHEBI:142511"/>
    </reaction>
</comment>
<comment type="catalytic activity">
    <reaction evidence="1">
        <text>O-(ADP-D-ribosyl)-L-seryl-[protein] + H2O = ADP-D-ribose + L-seryl-[protein]</text>
        <dbReference type="Rhea" id="RHEA:58256"/>
        <dbReference type="Rhea" id="RHEA-COMP:9863"/>
        <dbReference type="Rhea" id="RHEA-COMP:15091"/>
        <dbReference type="ChEBI" id="CHEBI:15377"/>
        <dbReference type="ChEBI" id="CHEBI:29999"/>
        <dbReference type="ChEBI" id="CHEBI:57967"/>
        <dbReference type="ChEBI" id="CHEBI:142556"/>
    </reaction>
</comment>
<comment type="catalytic activity">
    <reaction evidence="1">
        <text>alpha-NAD(+) + H2O = ADP-D-ribose + nicotinamide + H(+)</text>
        <dbReference type="Rhea" id="RHEA:68792"/>
        <dbReference type="ChEBI" id="CHEBI:15377"/>
        <dbReference type="ChEBI" id="CHEBI:15378"/>
        <dbReference type="ChEBI" id="CHEBI:17154"/>
        <dbReference type="ChEBI" id="CHEBI:57967"/>
        <dbReference type="ChEBI" id="CHEBI:77017"/>
    </reaction>
</comment>
<comment type="cofactor">
    <cofactor evidence="3">
        <name>Mg(2+)</name>
        <dbReference type="ChEBI" id="CHEBI:18420"/>
    </cofactor>
    <text evidence="3">Binds 2 magnesium ions per subunit.</text>
</comment>
<comment type="activity regulation">
    <text evidence="1">The protein undergoes a dramatic conformational switch from closed to open states upon substrate-binding, which enables specific substrate recognition for the 1''-O-linkage. The glutamate flap (Glu-47) blocks substrate entrance to Mg(2+) in the unliganded closed state. In presence of substrate, Glu-47 is ejected from the active site: this closed-to-open transition significantly widens the substrate-binding channel and precisely positions the scissile 1''-O-linkage for cleavage while securing tightly 2'- and 3'-hydroxyls of ADP-ribose.</text>
</comment>
<comment type="subunit">
    <text evidence="3">Monomer.</text>
</comment>
<comment type="subcellular location">
    <subcellularLocation>
        <location evidence="2 4">Nucleus</location>
    </subcellularLocation>
    <subcellularLocation>
        <location evidence="2">Cytoplasm</location>
    </subcellularLocation>
    <subcellularLocation>
        <location evidence="1">Chromosome</location>
    </subcellularLocation>
    <subcellularLocation>
        <location evidence="4">Mitochondrion matrix</location>
    </subcellularLocation>
    <text evidence="1">Recruited to DNA lesion regions following DNA damage; ADP-D-ribose-recognition is required for recruitment to DNA damage sites.</text>
</comment>
<comment type="alternative products">
    <event type="alternative splicing"/>
    <isoform>
        <id>Q8CG72-1</id>
        <name>1</name>
        <sequence type="displayed"/>
    </isoform>
    <isoform>
        <id>Q8CG72-2</id>
        <name>2</name>
        <sequence type="described" ref="VSP_023037"/>
    </isoform>
</comment>
<comment type="tissue specificity">
    <text evidence="2">Ubiquitous.</text>
</comment>
<comment type="disruption phenotype">
    <text evidence="5">Knockout mice are phenotypically normal and fertile (PubMed:30830864). 1 hour induced brain ischemia results in 100% fatality within 24 hours (PubMed:30830864). 30 minutes of induced brain ischemia results in an increase in infarct size in the cortex, hippocampus, and striatum (PubMed:30830864). Increased number of cortical neurons with nucleus-accumulated poly(ADP-ribose) and higher abundance of poly(ADP-ribose) in general (PubMed:30830864).</text>
</comment>
<comment type="similarity">
    <text evidence="8">Belongs to the ADP-ribosylglycohydrolase family.</text>
</comment>
<evidence type="ECO:0000250" key="1">
    <source>
        <dbReference type="UniProtKB" id="Q9NX46"/>
    </source>
</evidence>
<evidence type="ECO:0000269" key="2">
    <source>
    </source>
</evidence>
<evidence type="ECO:0000269" key="3">
    <source>
    </source>
</evidence>
<evidence type="ECO:0000269" key="4">
    <source>
    </source>
</evidence>
<evidence type="ECO:0000269" key="5">
    <source>
    </source>
</evidence>
<evidence type="ECO:0000303" key="6">
    <source>
    </source>
</evidence>
<evidence type="ECO:0000303" key="7">
    <source>
    </source>
</evidence>
<evidence type="ECO:0000305" key="8"/>
<evidence type="ECO:0000312" key="9">
    <source>
        <dbReference type="MGI" id="MGI:2140364"/>
    </source>
</evidence>
<evidence type="ECO:0007829" key="10">
    <source>
        <dbReference type="PDB" id="2QTY"/>
    </source>
</evidence>
<dbReference type="EC" id="3.5.1.-" evidence="1"/>
<dbReference type="EC" id="3.2.1.143" evidence="4"/>
<dbReference type="EC" id="3.2.2.-"/>
<dbReference type="EMBL" id="AJ427296">
    <property type="protein sequence ID" value="CAD20317.1"/>
    <property type="molecule type" value="mRNA"/>
</dbReference>
<dbReference type="EMBL" id="AK143583">
    <property type="protein sequence ID" value="BAE25451.1"/>
    <property type="molecule type" value="mRNA"/>
</dbReference>
<dbReference type="EMBL" id="AK147034">
    <property type="protein sequence ID" value="BAE27626.1"/>
    <property type="molecule type" value="mRNA"/>
</dbReference>
<dbReference type="EMBL" id="AK169070">
    <property type="protein sequence ID" value="BAE40857.1"/>
    <property type="molecule type" value="mRNA"/>
</dbReference>
<dbReference type="EMBL" id="AK171780">
    <property type="protein sequence ID" value="BAE42660.1"/>
    <property type="molecule type" value="mRNA"/>
</dbReference>
<dbReference type="EMBL" id="AL606976">
    <property type="status" value="NOT_ANNOTATED_CDS"/>
    <property type="molecule type" value="Genomic_DNA"/>
</dbReference>
<dbReference type="EMBL" id="BC010639">
    <property type="protein sequence ID" value="AAH10639.1"/>
    <property type="molecule type" value="mRNA"/>
</dbReference>
<dbReference type="EMBL" id="BC023177">
    <property type="protein sequence ID" value="AAH23177.2"/>
    <property type="molecule type" value="mRNA"/>
</dbReference>
<dbReference type="EMBL" id="BC045203">
    <property type="protein sequence ID" value="AAH45203.1"/>
    <property type="molecule type" value="mRNA"/>
</dbReference>
<dbReference type="CCDS" id="CCDS18650.1">
    <molecule id="Q8CG72-1"/>
</dbReference>
<dbReference type="RefSeq" id="NP_598644.1">
    <molecule id="Q8CG72-1"/>
    <property type="nucleotide sequence ID" value="NM_133883.2"/>
</dbReference>
<dbReference type="PDB" id="2QTY">
    <property type="method" value="X-ray"/>
    <property type="resolution" value="1.80 A"/>
    <property type="chains" value="A/B=25-369"/>
</dbReference>
<dbReference type="PDBsum" id="2QTY"/>
<dbReference type="SMR" id="Q8CG72"/>
<dbReference type="FunCoup" id="Q8CG72">
    <property type="interactions" value="3451"/>
</dbReference>
<dbReference type="STRING" id="10090.ENSMUSP00000099677"/>
<dbReference type="GlyGen" id="Q8CG72">
    <property type="glycosylation" value="1 site"/>
</dbReference>
<dbReference type="PhosphoSitePlus" id="Q8CG72"/>
<dbReference type="SwissPalm" id="Q8CG72"/>
<dbReference type="PaxDb" id="10090-ENSMUSP00000099677"/>
<dbReference type="PeptideAtlas" id="Q8CG72"/>
<dbReference type="ProteomicsDB" id="283219">
    <molecule id="Q8CG72-1"/>
</dbReference>
<dbReference type="ProteomicsDB" id="283220">
    <molecule id="Q8CG72-2"/>
</dbReference>
<dbReference type="Pumba" id="Q8CG72"/>
<dbReference type="Antibodypedia" id="17409">
    <property type="antibodies" value="113 antibodies from 22 providers"/>
</dbReference>
<dbReference type="DNASU" id="100206"/>
<dbReference type="Ensembl" id="ENSMUST00000102617.5">
    <molecule id="Q8CG72-1"/>
    <property type="protein sequence ID" value="ENSMUSP00000099677.5"/>
    <property type="gene ID" value="ENSMUSG00000042558.17"/>
</dbReference>
<dbReference type="GeneID" id="100206"/>
<dbReference type="KEGG" id="mmu:100206"/>
<dbReference type="UCSC" id="uc008ute.1">
    <molecule id="Q8CG72-1"/>
    <property type="organism name" value="mouse"/>
</dbReference>
<dbReference type="AGR" id="MGI:2140364"/>
<dbReference type="CTD" id="54936"/>
<dbReference type="MGI" id="MGI:2140364">
    <property type="gene designation" value="Adprs"/>
</dbReference>
<dbReference type="VEuPathDB" id="HostDB:ENSMUSG00000042558"/>
<dbReference type="eggNOG" id="ENOG502QUER">
    <property type="taxonomic scope" value="Eukaryota"/>
</dbReference>
<dbReference type="GeneTree" id="ENSGT00390000015369"/>
<dbReference type="HOGENOM" id="CLU_024566_6_0_1"/>
<dbReference type="InParanoid" id="Q8CG72"/>
<dbReference type="OMA" id="HMEHVEA"/>
<dbReference type="OrthoDB" id="410104at2759"/>
<dbReference type="PhylomeDB" id="Q8CG72"/>
<dbReference type="TreeFam" id="TF324754"/>
<dbReference type="BRENDA" id="3.2.1.143">
    <property type="organism ID" value="3474"/>
</dbReference>
<dbReference type="Reactome" id="R-MMU-110362">
    <property type="pathway name" value="POLB-Dependent Long Patch Base Excision Repair"/>
</dbReference>
<dbReference type="BioGRID-ORCS" id="100206">
    <property type="hits" value="0 hits in 78 CRISPR screens"/>
</dbReference>
<dbReference type="ChiTaRS" id="Adprhl2">
    <property type="organism name" value="mouse"/>
</dbReference>
<dbReference type="EvolutionaryTrace" id="Q8CG72"/>
<dbReference type="PRO" id="PR:Q8CG72"/>
<dbReference type="Proteomes" id="UP000000589">
    <property type="component" value="Chromosome 4"/>
</dbReference>
<dbReference type="RNAct" id="Q8CG72">
    <property type="molecule type" value="protein"/>
</dbReference>
<dbReference type="Bgee" id="ENSMUSG00000042558">
    <property type="expression patterns" value="Expressed in lip and 246 other cell types or tissues"/>
</dbReference>
<dbReference type="GO" id="GO:0005737">
    <property type="term" value="C:cytoplasm"/>
    <property type="evidence" value="ECO:0000314"/>
    <property type="project" value="MGI"/>
</dbReference>
<dbReference type="GO" id="GO:0005759">
    <property type="term" value="C:mitochondrial matrix"/>
    <property type="evidence" value="ECO:0007669"/>
    <property type="project" value="UniProtKB-SubCell"/>
</dbReference>
<dbReference type="GO" id="GO:0005739">
    <property type="term" value="C:mitochondrion"/>
    <property type="evidence" value="ECO:0000314"/>
    <property type="project" value="MGI"/>
</dbReference>
<dbReference type="GO" id="GO:0016604">
    <property type="term" value="C:nuclear body"/>
    <property type="evidence" value="ECO:0007669"/>
    <property type="project" value="Ensembl"/>
</dbReference>
<dbReference type="GO" id="GO:0005634">
    <property type="term" value="C:nucleus"/>
    <property type="evidence" value="ECO:0000314"/>
    <property type="project" value="MGI"/>
</dbReference>
<dbReference type="GO" id="GO:0090734">
    <property type="term" value="C:site of DNA damage"/>
    <property type="evidence" value="ECO:0000250"/>
    <property type="project" value="UniProtKB"/>
</dbReference>
<dbReference type="GO" id="GO:0140292">
    <property type="term" value="F:ADP-ribosylserine hydrolase activity"/>
    <property type="evidence" value="ECO:0000315"/>
    <property type="project" value="UniProtKB"/>
</dbReference>
<dbReference type="GO" id="GO:0004553">
    <property type="term" value="F:hydrolase activity, hydrolyzing O-glycosyl compounds"/>
    <property type="evidence" value="ECO:0000250"/>
    <property type="project" value="UniProtKB"/>
</dbReference>
<dbReference type="GO" id="GO:0000287">
    <property type="term" value="F:magnesium ion binding"/>
    <property type="evidence" value="ECO:0000250"/>
    <property type="project" value="UniProtKB"/>
</dbReference>
<dbReference type="GO" id="GO:0061463">
    <property type="term" value="F:O-acetyl-ADP-ribose deacetylase activity"/>
    <property type="evidence" value="ECO:0000250"/>
    <property type="project" value="UniProtKB"/>
</dbReference>
<dbReference type="GO" id="GO:0004649">
    <property type="term" value="F:poly(ADP-ribose) glycohydrolase activity"/>
    <property type="evidence" value="ECO:0000314"/>
    <property type="project" value="UniProtKB"/>
</dbReference>
<dbReference type="GO" id="GO:0071451">
    <property type="term" value="P:cellular response to superoxide"/>
    <property type="evidence" value="ECO:0000315"/>
    <property type="project" value="MGI"/>
</dbReference>
<dbReference type="GO" id="GO:0006281">
    <property type="term" value="P:DNA repair"/>
    <property type="evidence" value="ECO:0000250"/>
    <property type="project" value="UniProtKB"/>
</dbReference>
<dbReference type="GO" id="GO:0060546">
    <property type="term" value="P:negative regulation of necroptotic process"/>
    <property type="evidence" value="ECO:0000314"/>
    <property type="project" value="UniProtKB"/>
</dbReference>
<dbReference type="GO" id="GO:0140290">
    <property type="term" value="P:peptidyl-serine ADP-deribosylation"/>
    <property type="evidence" value="ECO:0000314"/>
    <property type="project" value="UniProtKB"/>
</dbReference>
<dbReference type="FunFam" id="1.10.4080.10:FF:000001">
    <property type="entry name" value="ADP-ribose glycohydrolase ARH3"/>
    <property type="match status" value="1"/>
</dbReference>
<dbReference type="Gene3D" id="1.10.4080.10">
    <property type="entry name" value="ADP-ribosylation/Crystallin J1"/>
    <property type="match status" value="1"/>
</dbReference>
<dbReference type="InterPro" id="IPR050792">
    <property type="entry name" value="ADP-ribosylglycohydrolase"/>
</dbReference>
<dbReference type="InterPro" id="IPR005502">
    <property type="entry name" value="Ribosyl_crysJ1"/>
</dbReference>
<dbReference type="InterPro" id="IPR036705">
    <property type="entry name" value="Ribosyl_crysJ1_sf"/>
</dbReference>
<dbReference type="PANTHER" id="PTHR16222">
    <property type="entry name" value="ADP-RIBOSYLGLYCOHYDROLASE"/>
    <property type="match status" value="1"/>
</dbReference>
<dbReference type="PANTHER" id="PTHR16222:SF24">
    <property type="entry name" value="ADP-RIBOSYLHYDROLASE ARH3"/>
    <property type="match status" value="1"/>
</dbReference>
<dbReference type="Pfam" id="PF03747">
    <property type="entry name" value="ADP_ribosyl_GH"/>
    <property type="match status" value="1"/>
</dbReference>
<dbReference type="SUPFAM" id="SSF101478">
    <property type="entry name" value="ADP-ribosylglycohydrolase"/>
    <property type="match status" value="1"/>
</dbReference>
<protein>
    <recommendedName>
        <fullName>ADP-ribosylhydrolase ARH3</fullName>
    </recommendedName>
    <alternativeName>
        <fullName evidence="8">ADP-ribose glycohydrolase ARH3</fullName>
    </alternativeName>
    <alternativeName>
        <fullName evidence="7">ADP-ribosylhydrolase 3</fullName>
    </alternativeName>
    <alternativeName>
        <fullName evidence="8">O-acetyl-ADP-ribose deacetylase ARH3</fullName>
        <ecNumber evidence="1">3.5.1.-</ecNumber>
    </alternativeName>
    <alternativeName>
        <fullName evidence="8">Poly(ADP-ribose) glycohydrolase ARH3</fullName>
        <ecNumber evidence="4">3.2.1.143</ecNumber>
    </alternativeName>
    <alternativeName>
        <fullName evidence="8">[Protein ADP-ribosylarginine] hydrolase-like protein 2</fullName>
    </alternativeName>
    <alternativeName>
        <fullName>[Protein ADP-ribosylserine] hydrolase</fullName>
        <ecNumber>3.2.2.-</ecNumber>
    </alternativeName>
</protein>
<feature type="chain" id="PRO_0000277614" description="ADP-ribosylhydrolase ARH3">
    <location>
        <begin position="1"/>
        <end position="370"/>
    </location>
</feature>
<feature type="binding site" evidence="3">
    <location>
        <position position="47"/>
    </location>
    <ligand>
        <name>Mg(2+)</name>
        <dbReference type="ChEBI" id="CHEBI:18420"/>
        <label>2</label>
    </ligand>
</feature>
<feature type="binding site" evidence="3">
    <location>
        <position position="82"/>
    </location>
    <ligand>
        <name>Mg(2+)</name>
        <dbReference type="ChEBI" id="CHEBI:18420"/>
        <label>1</label>
    </ligand>
</feature>
<feature type="binding site" evidence="3">
    <location>
        <position position="83"/>
    </location>
    <ligand>
        <name>Mg(2+)</name>
        <dbReference type="ChEBI" id="CHEBI:18420"/>
        <label>1</label>
    </ligand>
</feature>
<feature type="binding site" evidence="1">
    <location>
        <position position="83"/>
    </location>
    <ligand>
        <name>substrate</name>
    </ligand>
</feature>
<feature type="binding site" evidence="3">
    <location>
        <position position="84"/>
    </location>
    <ligand>
        <name>Mg(2+)</name>
        <dbReference type="ChEBI" id="CHEBI:18420"/>
        <label>1</label>
    </ligand>
</feature>
<feature type="binding site" evidence="1">
    <location>
        <begin position="152"/>
        <end position="158"/>
    </location>
    <ligand>
        <name>substrate</name>
    </ligand>
</feature>
<feature type="binding site" evidence="1">
    <location>
        <position position="188"/>
    </location>
    <ligand>
        <name>substrate</name>
    </ligand>
</feature>
<feature type="binding site" evidence="1">
    <location>
        <position position="241"/>
    </location>
    <ligand>
        <name>substrate</name>
    </ligand>
</feature>
<feature type="binding site" evidence="1">
    <location>
        <position position="277"/>
    </location>
    <ligand>
        <name>substrate</name>
    </ligand>
</feature>
<feature type="binding site" evidence="3">
    <location>
        <position position="320"/>
    </location>
    <ligand>
        <name>Mg(2+)</name>
        <dbReference type="ChEBI" id="CHEBI:18420"/>
        <label>2</label>
    </ligand>
</feature>
<feature type="binding site" evidence="3">
    <location>
        <position position="322"/>
    </location>
    <ligand>
        <name>Mg(2+)</name>
        <dbReference type="ChEBI" id="CHEBI:18420"/>
        <label>1</label>
    </ligand>
</feature>
<feature type="binding site" evidence="3">
    <location>
        <position position="322"/>
    </location>
    <ligand>
        <name>Mg(2+)</name>
        <dbReference type="ChEBI" id="CHEBI:18420"/>
        <label>2</label>
    </ligand>
</feature>
<feature type="binding site" evidence="3">
    <location>
        <position position="323"/>
    </location>
    <ligand>
        <name>Mg(2+)</name>
        <dbReference type="ChEBI" id="CHEBI:18420"/>
        <label>2</label>
    </ligand>
</feature>
<feature type="site" description="Glutamate flap" evidence="1">
    <location>
        <position position="47"/>
    </location>
</feature>
<feature type="modified residue" description="Phosphothreonine" evidence="1">
    <location>
        <position position="70"/>
    </location>
</feature>
<feature type="splice variant" id="VSP_023037" description="In isoform 2." evidence="6">
    <location>
        <begin position="1"/>
        <end position="86"/>
    </location>
</feature>
<feature type="sequence conflict" description="In Ref. 4; AAH23177." evidence="8" ref="4">
    <original>E</original>
    <variation>Q</variation>
    <location>
        <position position="77"/>
    </location>
</feature>
<feature type="helix" evidence="10">
    <location>
        <begin position="25"/>
        <end position="43"/>
    </location>
</feature>
<feature type="helix" evidence="10">
    <location>
        <begin position="44"/>
        <end position="46"/>
    </location>
</feature>
<feature type="helix" evidence="10">
    <location>
        <begin position="54"/>
        <end position="62"/>
    </location>
</feature>
<feature type="helix" evidence="10">
    <location>
        <begin position="83"/>
        <end position="98"/>
    </location>
</feature>
<feature type="helix" evidence="10">
    <location>
        <begin position="103"/>
        <end position="116"/>
    </location>
</feature>
<feature type="turn" evidence="10">
    <location>
        <begin position="118"/>
        <end position="121"/>
    </location>
</feature>
<feature type="helix" evidence="10">
    <location>
        <begin position="124"/>
        <end position="133"/>
    </location>
</feature>
<feature type="helix" evidence="10">
    <location>
        <begin position="143"/>
        <end position="146"/>
    </location>
</feature>
<feature type="helix" evidence="10">
    <location>
        <begin position="148"/>
        <end position="151"/>
    </location>
</feature>
<feature type="helix" evidence="10">
    <location>
        <begin position="158"/>
        <end position="161"/>
    </location>
</feature>
<feature type="helix" evidence="10">
    <location>
        <begin position="164"/>
        <end position="169"/>
    </location>
</feature>
<feature type="helix" evidence="10">
    <location>
        <begin position="173"/>
        <end position="185"/>
    </location>
</feature>
<feature type="helix" evidence="10">
    <location>
        <begin position="191"/>
        <end position="209"/>
    </location>
</feature>
<feature type="helix" evidence="10">
    <location>
        <begin position="214"/>
        <end position="228"/>
    </location>
</feature>
<feature type="helix" evidence="10">
    <location>
        <begin position="232"/>
        <end position="239"/>
    </location>
</feature>
<feature type="turn" evidence="10">
    <location>
        <begin position="240"/>
        <end position="242"/>
    </location>
</feature>
<feature type="helix" evidence="10">
    <location>
        <begin position="247"/>
        <end position="259"/>
    </location>
</feature>
<feature type="helix" evidence="10">
    <location>
        <begin position="266"/>
        <end position="273"/>
    </location>
</feature>
<feature type="strand" evidence="10">
    <location>
        <begin position="276"/>
        <end position="278"/>
    </location>
</feature>
<feature type="helix" evidence="10">
    <location>
        <begin position="279"/>
        <end position="281"/>
    </location>
</feature>
<feature type="helix" evidence="10">
    <location>
        <begin position="283"/>
        <end position="292"/>
    </location>
</feature>
<feature type="helix" evidence="10">
    <location>
        <begin position="306"/>
        <end position="315"/>
    </location>
</feature>
<feature type="helix" evidence="10">
    <location>
        <begin position="321"/>
        <end position="336"/>
    </location>
</feature>
<feature type="helix" evidence="10">
    <location>
        <begin position="338"/>
        <end position="340"/>
    </location>
</feature>
<feature type="helix" evidence="10">
    <location>
        <begin position="343"/>
        <end position="346"/>
    </location>
</feature>
<feature type="helix" evidence="10">
    <location>
        <begin position="352"/>
        <end position="366"/>
    </location>
</feature>
<gene>
    <name type="primary">Adprs</name>
    <name evidence="9" type="synonym">Adprhl2</name>
    <name evidence="7" type="synonym">Arh3</name>
</gene>
<name>ADPRS_MOUSE</name>
<proteinExistence type="evidence at protein level"/>
<organism>
    <name type="scientific">Mus musculus</name>
    <name type="common">Mouse</name>
    <dbReference type="NCBI Taxonomy" id="10090"/>
    <lineage>
        <taxon>Eukaryota</taxon>
        <taxon>Metazoa</taxon>
        <taxon>Chordata</taxon>
        <taxon>Craniata</taxon>
        <taxon>Vertebrata</taxon>
        <taxon>Euteleostomi</taxon>
        <taxon>Mammalia</taxon>
        <taxon>Eutheria</taxon>
        <taxon>Euarchontoglires</taxon>
        <taxon>Glires</taxon>
        <taxon>Rodentia</taxon>
        <taxon>Myomorpha</taxon>
        <taxon>Muroidea</taxon>
        <taxon>Muridae</taxon>
        <taxon>Murinae</taxon>
        <taxon>Mus</taxon>
        <taxon>Mus</taxon>
    </lineage>
</organism>
<keyword id="KW-0002">3D-structure</keyword>
<keyword id="KW-0025">Alternative splicing</keyword>
<keyword id="KW-0158">Chromosome</keyword>
<keyword id="KW-0963">Cytoplasm</keyword>
<keyword id="KW-0227">DNA damage</keyword>
<keyword id="KW-0234">DNA repair</keyword>
<keyword id="KW-0378">Hydrolase</keyword>
<keyword id="KW-0460">Magnesium</keyword>
<keyword id="KW-0479">Metal-binding</keyword>
<keyword id="KW-0496">Mitochondrion</keyword>
<keyword id="KW-0539">Nucleus</keyword>
<keyword id="KW-0597">Phosphoprotein</keyword>
<keyword id="KW-1185">Reference proteome</keyword>
<sequence length="370" mass="39414">MAVAAAAAATAMSAAGGGGASAARSISRFRGCLAGALLGDCVGAVYEAHDTVSLASVLSHVESLEPDPGTPGSARTETLYYTDDTAMTRALVQSLLAKEAFDEVDMAHRFAQEYKKDPDRGYGAGVITVFKKLLNPKCRDVYEPARAQFNGKGSYGNGGAMRVAGISLAYSSVQDVQKFARLSAQLTHASSLGYNGAILQALAVHLALQGVSSSEHFLEQLLGHMEELEGDAQSVLDAKELGMEERPYSSRLKKVGELLDQDVVSREEVVSELGNGIAAFESVPTAIYCFLRCMEPHPEIPSTFNSLQRTLIYSISLGGDTDTIATMAGAIAGAYYGMEQVPESWQQSCEGFEETDVLAQSLHRVFQESS</sequence>
<reference key="1">
    <citation type="journal article" date="2002" name="Protein Sci.">
        <title>The family of toxin-related ecto-ADP-ribosyltransferases in humans and the mouse.</title>
        <authorList>
            <person name="Glowacki G."/>
            <person name="Braren R."/>
            <person name="Firner K."/>
            <person name="Nissen M."/>
            <person name="Kuehl M."/>
            <person name="Reche P."/>
            <person name="Bazan J.F."/>
            <person name="Cetkovic-Cvrlje M."/>
            <person name="Leiter E."/>
            <person name="Haag F."/>
            <person name="Koch-Nolte F."/>
        </authorList>
    </citation>
    <scope>NUCLEOTIDE SEQUENCE [MRNA] (ISOFORM 1)</scope>
    <source>
        <strain>C57BL/6J</strain>
    </source>
</reference>
<reference key="2">
    <citation type="journal article" date="2005" name="Science">
        <title>The transcriptional landscape of the mammalian genome.</title>
        <authorList>
            <person name="Carninci P."/>
            <person name="Kasukawa T."/>
            <person name="Katayama S."/>
            <person name="Gough J."/>
            <person name="Frith M.C."/>
            <person name="Maeda N."/>
            <person name="Oyama R."/>
            <person name="Ravasi T."/>
            <person name="Lenhard B."/>
            <person name="Wells C."/>
            <person name="Kodzius R."/>
            <person name="Shimokawa K."/>
            <person name="Bajic V.B."/>
            <person name="Brenner S.E."/>
            <person name="Batalov S."/>
            <person name="Forrest A.R."/>
            <person name="Zavolan M."/>
            <person name="Davis M.J."/>
            <person name="Wilming L.G."/>
            <person name="Aidinis V."/>
            <person name="Allen J.E."/>
            <person name="Ambesi-Impiombato A."/>
            <person name="Apweiler R."/>
            <person name="Aturaliya R.N."/>
            <person name="Bailey T.L."/>
            <person name="Bansal M."/>
            <person name="Baxter L."/>
            <person name="Beisel K.W."/>
            <person name="Bersano T."/>
            <person name="Bono H."/>
            <person name="Chalk A.M."/>
            <person name="Chiu K.P."/>
            <person name="Choudhary V."/>
            <person name="Christoffels A."/>
            <person name="Clutterbuck D.R."/>
            <person name="Crowe M.L."/>
            <person name="Dalla E."/>
            <person name="Dalrymple B.P."/>
            <person name="de Bono B."/>
            <person name="Della Gatta G."/>
            <person name="di Bernardo D."/>
            <person name="Down T."/>
            <person name="Engstrom P."/>
            <person name="Fagiolini M."/>
            <person name="Faulkner G."/>
            <person name="Fletcher C.F."/>
            <person name="Fukushima T."/>
            <person name="Furuno M."/>
            <person name="Futaki S."/>
            <person name="Gariboldi M."/>
            <person name="Georgii-Hemming P."/>
            <person name="Gingeras T.R."/>
            <person name="Gojobori T."/>
            <person name="Green R.E."/>
            <person name="Gustincich S."/>
            <person name="Harbers M."/>
            <person name="Hayashi Y."/>
            <person name="Hensch T.K."/>
            <person name="Hirokawa N."/>
            <person name="Hill D."/>
            <person name="Huminiecki L."/>
            <person name="Iacono M."/>
            <person name="Ikeo K."/>
            <person name="Iwama A."/>
            <person name="Ishikawa T."/>
            <person name="Jakt M."/>
            <person name="Kanapin A."/>
            <person name="Katoh M."/>
            <person name="Kawasawa Y."/>
            <person name="Kelso J."/>
            <person name="Kitamura H."/>
            <person name="Kitano H."/>
            <person name="Kollias G."/>
            <person name="Krishnan S.P."/>
            <person name="Kruger A."/>
            <person name="Kummerfeld S.K."/>
            <person name="Kurochkin I.V."/>
            <person name="Lareau L.F."/>
            <person name="Lazarevic D."/>
            <person name="Lipovich L."/>
            <person name="Liu J."/>
            <person name="Liuni S."/>
            <person name="McWilliam S."/>
            <person name="Madan Babu M."/>
            <person name="Madera M."/>
            <person name="Marchionni L."/>
            <person name="Matsuda H."/>
            <person name="Matsuzawa S."/>
            <person name="Miki H."/>
            <person name="Mignone F."/>
            <person name="Miyake S."/>
            <person name="Morris K."/>
            <person name="Mottagui-Tabar S."/>
            <person name="Mulder N."/>
            <person name="Nakano N."/>
            <person name="Nakauchi H."/>
            <person name="Ng P."/>
            <person name="Nilsson R."/>
            <person name="Nishiguchi S."/>
            <person name="Nishikawa S."/>
            <person name="Nori F."/>
            <person name="Ohara O."/>
            <person name="Okazaki Y."/>
            <person name="Orlando V."/>
            <person name="Pang K.C."/>
            <person name="Pavan W.J."/>
            <person name="Pavesi G."/>
            <person name="Pesole G."/>
            <person name="Petrovsky N."/>
            <person name="Piazza S."/>
            <person name="Reed J."/>
            <person name="Reid J.F."/>
            <person name="Ring B.Z."/>
            <person name="Ringwald M."/>
            <person name="Rost B."/>
            <person name="Ruan Y."/>
            <person name="Salzberg S.L."/>
            <person name="Sandelin A."/>
            <person name="Schneider C."/>
            <person name="Schoenbach C."/>
            <person name="Sekiguchi K."/>
            <person name="Semple C.A."/>
            <person name="Seno S."/>
            <person name="Sessa L."/>
            <person name="Sheng Y."/>
            <person name="Shibata Y."/>
            <person name="Shimada H."/>
            <person name="Shimada K."/>
            <person name="Silva D."/>
            <person name="Sinclair B."/>
            <person name="Sperling S."/>
            <person name="Stupka E."/>
            <person name="Sugiura K."/>
            <person name="Sultana R."/>
            <person name="Takenaka Y."/>
            <person name="Taki K."/>
            <person name="Tammoja K."/>
            <person name="Tan S.L."/>
            <person name="Tang S."/>
            <person name="Taylor M.S."/>
            <person name="Tegner J."/>
            <person name="Teichmann S.A."/>
            <person name="Ueda H.R."/>
            <person name="van Nimwegen E."/>
            <person name="Verardo R."/>
            <person name="Wei C.L."/>
            <person name="Yagi K."/>
            <person name="Yamanishi H."/>
            <person name="Zabarovsky E."/>
            <person name="Zhu S."/>
            <person name="Zimmer A."/>
            <person name="Hide W."/>
            <person name="Bult C."/>
            <person name="Grimmond S.M."/>
            <person name="Teasdale R.D."/>
            <person name="Liu E.T."/>
            <person name="Brusic V."/>
            <person name="Quackenbush J."/>
            <person name="Wahlestedt C."/>
            <person name="Mattick J.S."/>
            <person name="Hume D.A."/>
            <person name="Kai C."/>
            <person name="Sasaki D."/>
            <person name="Tomaru Y."/>
            <person name="Fukuda S."/>
            <person name="Kanamori-Katayama M."/>
            <person name="Suzuki M."/>
            <person name="Aoki J."/>
            <person name="Arakawa T."/>
            <person name="Iida J."/>
            <person name="Imamura K."/>
            <person name="Itoh M."/>
            <person name="Kato T."/>
            <person name="Kawaji H."/>
            <person name="Kawagashira N."/>
            <person name="Kawashima T."/>
            <person name="Kojima M."/>
            <person name="Kondo S."/>
            <person name="Konno H."/>
            <person name="Nakano K."/>
            <person name="Ninomiya N."/>
            <person name="Nishio T."/>
            <person name="Okada M."/>
            <person name="Plessy C."/>
            <person name="Shibata K."/>
            <person name="Shiraki T."/>
            <person name="Suzuki S."/>
            <person name="Tagami M."/>
            <person name="Waki K."/>
            <person name="Watahiki A."/>
            <person name="Okamura-Oho Y."/>
            <person name="Suzuki H."/>
            <person name="Kawai J."/>
            <person name="Hayashizaki Y."/>
        </authorList>
    </citation>
    <scope>NUCLEOTIDE SEQUENCE [LARGE SCALE MRNA] (ISOFORM 1)</scope>
    <source>
        <strain>C57BL/6J</strain>
        <strain>NOD</strain>
        <tissue>Kidney</tissue>
        <tissue>Liver</tissue>
        <tissue>Spleen</tissue>
    </source>
</reference>
<reference key="3">
    <citation type="journal article" date="2009" name="PLoS Biol.">
        <title>Lineage-specific biology revealed by a finished genome assembly of the mouse.</title>
        <authorList>
            <person name="Church D.M."/>
            <person name="Goodstadt L."/>
            <person name="Hillier L.W."/>
            <person name="Zody M.C."/>
            <person name="Goldstein S."/>
            <person name="She X."/>
            <person name="Bult C.J."/>
            <person name="Agarwala R."/>
            <person name="Cherry J.L."/>
            <person name="DiCuccio M."/>
            <person name="Hlavina W."/>
            <person name="Kapustin Y."/>
            <person name="Meric P."/>
            <person name="Maglott D."/>
            <person name="Birtle Z."/>
            <person name="Marques A.C."/>
            <person name="Graves T."/>
            <person name="Zhou S."/>
            <person name="Teague B."/>
            <person name="Potamousis K."/>
            <person name="Churas C."/>
            <person name="Place M."/>
            <person name="Herschleb J."/>
            <person name="Runnheim R."/>
            <person name="Forrest D."/>
            <person name="Amos-Landgraf J."/>
            <person name="Schwartz D.C."/>
            <person name="Cheng Z."/>
            <person name="Lindblad-Toh K."/>
            <person name="Eichler E.E."/>
            <person name="Ponting C.P."/>
        </authorList>
    </citation>
    <scope>NUCLEOTIDE SEQUENCE [LARGE SCALE GENOMIC DNA]</scope>
    <source>
        <strain>C57BL/6J</strain>
    </source>
</reference>
<reference key="4">
    <citation type="journal article" date="2004" name="Genome Res.">
        <title>The status, quality, and expansion of the NIH full-length cDNA project: the Mammalian Gene Collection (MGC).</title>
        <authorList>
            <consortium name="The MGC Project Team"/>
        </authorList>
    </citation>
    <scope>NUCLEOTIDE SEQUENCE [LARGE SCALE MRNA] (ISOFORMS 1 AND 2)</scope>
    <source>
        <strain>FVB/N-3</strain>
        <tissue>Mammary gland</tissue>
    </source>
</reference>
<reference key="5">
    <citation type="journal article" date="2006" name="J. Biol. Chem.">
        <title>Identification and characterization of a mammalian 39-kDa poly(ADP-ribose) glycohydrolase.</title>
        <authorList>
            <person name="Oka S."/>
            <person name="Kato J."/>
            <person name="Moss J."/>
        </authorList>
    </citation>
    <scope>SUBCELLULAR LOCATION</scope>
    <scope>TISSUE SPECIFICITY</scope>
</reference>
<reference key="6">
    <citation type="journal article" date="2010" name="Cell">
        <title>A tissue-specific atlas of mouse protein phosphorylation and expression.</title>
        <authorList>
            <person name="Huttlin E.L."/>
            <person name="Jedrychowski M.P."/>
            <person name="Elias J.E."/>
            <person name="Goswami T."/>
            <person name="Rad R."/>
            <person name="Beausoleil S.A."/>
            <person name="Villen J."/>
            <person name="Haas W."/>
            <person name="Sowa M.E."/>
            <person name="Gygi S.P."/>
        </authorList>
    </citation>
    <scope>IDENTIFICATION BY MASS SPECTROMETRY [LARGE SCALE ANALYSIS]</scope>
    <source>
        <tissue>Brain</tissue>
        <tissue>Brown adipose tissue</tissue>
        <tissue>Heart</tissue>
        <tissue>Kidney</tissue>
        <tissue>Liver</tissue>
        <tissue>Lung</tissue>
        <tissue>Pancreas</tissue>
        <tissue>Spleen</tissue>
        <tissue>Testis</tissue>
    </source>
</reference>
<reference key="7">
    <citation type="journal article" date="2013" name="Proc. Natl. Acad. Sci. U.S.A.">
        <title>ADP-ribosyl-acceptor hydrolase 3 regulates poly (ADP-ribose) degradation and cell death during oxidative stress.</title>
        <authorList>
            <person name="Mashimo M."/>
            <person name="Kato J."/>
            <person name="Moss J."/>
        </authorList>
    </citation>
    <scope>FUNCTION</scope>
    <scope>CATALYTIC ACTIVITY</scope>
    <scope>SUBCELLULAR LOCATION</scope>
</reference>
<reference key="8">
    <citation type="journal article" date="2019" name="JCI Insight">
        <title>PARP1 inhibition alleviates injury in ARH3-deficient mice and human cells.</title>
        <authorList>
            <person name="Mashimo M."/>
            <person name="Bu X."/>
            <person name="Aoyama K."/>
            <person name="Kato J."/>
            <person name="Ishiwata-Endo H."/>
            <person name="Stevens L.A."/>
            <person name="Kasamatsu A."/>
            <person name="Wolfe L.A."/>
            <person name="Toro C."/>
            <person name="Adams D."/>
            <person name="Markello T."/>
            <person name="Gahl W.A."/>
            <person name="Moss J."/>
        </authorList>
    </citation>
    <scope>FUNCTION</scope>
    <scope>DISRUPTION PHENOTYPE</scope>
</reference>
<reference key="9">
    <citation type="journal article" date="2008" name="Acta Crystallogr. F">
        <title>Structure of mouse ADP-ribosylhydrolase 3 (mARH3).</title>
        <authorList>
            <person name="Mueller-Dieckmann C."/>
            <person name="Kernstock S."/>
            <person name="Mueller-Dieckmann J."/>
            <person name="Weiss M.S."/>
            <person name="Koch-Nolte F."/>
        </authorList>
    </citation>
    <scope>X-RAY CRYSTALLOGRAPHY (1.8 ANGSTROMS) OF 25-369</scope>
    <scope>SUBUNIT</scope>
    <scope>COFACTOR</scope>
    <scope>MAGNESIUM-BINDING SITES</scope>
</reference>